<sequence length="420" mass="47378">MSTPIETAWQLAKARYASLNIDVEAALEQLDQIPVSMHCWQGDDVAGFENTGGPLTGGIQATGNYPGKASTPDELRADLEQAFALIPGPKRLNLHAIYLESAQPVARNEIAPEHFRTWVEWAKRHQLGLDFNPTCFSHPLSADGFTLSHPDEKVRRFWIEHCQASRRISAYFGRELGTPSVMNIWVPDGMKDLTIDRLAFRQRLLSALDEIIAEPLDQAHHIDAVESKLFGIGAESFTVGSNEFYLGYAASRGTALCLDAGHFHPTEVISDKISSAILYVPRLLLHVSRPVRWDSDHVVLLDDETQAIAHEIVRHKLLNRVHIGLDFFDASINRIAAWVIGTRNMKKALLRALLEPTETLRKLEQNGDYTARLALLEEQKSLPWQAVWEHYCQCHDVIPGSEWLQQVRQYEETILTQRQG</sequence>
<protein>
    <recommendedName>
        <fullName evidence="1">L-rhamnose isomerase</fullName>
        <ecNumber evidence="1">5.3.1.14</ecNumber>
    </recommendedName>
</protein>
<dbReference type="EC" id="5.3.1.14" evidence="1"/>
<dbReference type="EMBL" id="CP001657">
    <property type="protein sequence ID" value="ACT11475.1"/>
    <property type="molecule type" value="Genomic_DNA"/>
</dbReference>
<dbReference type="RefSeq" id="WP_012773131.1">
    <property type="nucleotide sequence ID" value="NC_012917.1"/>
</dbReference>
<dbReference type="SMR" id="C6DJR2"/>
<dbReference type="STRING" id="561230.PC1_0419"/>
<dbReference type="KEGG" id="pct:PC1_0419"/>
<dbReference type="eggNOG" id="COG4806">
    <property type="taxonomic scope" value="Bacteria"/>
</dbReference>
<dbReference type="HOGENOM" id="CLU_052790_0_0_6"/>
<dbReference type="OrthoDB" id="9766697at2"/>
<dbReference type="UniPathway" id="UPA00541">
    <property type="reaction ID" value="UER00601"/>
</dbReference>
<dbReference type="Proteomes" id="UP000002736">
    <property type="component" value="Chromosome"/>
</dbReference>
<dbReference type="GO" id="GO:0005737">
    <property type="term" value="C:cytoplasm"/>
    <property type="evidence" value="ECO:0007669"/>
    <property type="project" value="UniProtKB-SubCell"/>
</dbReference>
<dbReference type="GO" id="GO:0008740">
    <property type="term" value="F:L-rhamnose isomerase activity"/>
    <property type="evidence" value="ECO:0007669"/>
    <property type="project" value="UniProtKB-UniRule"/>
</dbReference>
<dbReference type="GO" id="GO:0030145">
    <property type="term" value="F:manganese ion binding"/>
    <property type="evidence" value="ECO:0007669"/>
    <property type="project" value="UniProtKB-UniRule"/>
</dbReference>
<dbReference type="GO" id="GO:0019324">
    <property type="term" value="P:L-lyxose metabolic process"/>
    <property type="evidence" value="ECO:0007669"/>
    <property type="project" value="TreeGrafter"/>
</dbReference>
<dbReference type="GO" id="GO:0019301">
    <property type="term" value="P:rhamnose catabolic process"/>
    <property type="evidence" value="ECO:0007669"/>
    <property type="project" value="UniProtKB-UniRule"/>
</dbReference>
<dbReference type="FunFam" id="3.20.20.150:FF:000006">
    <property type="entry name" value="L-rhamnose isomerase"/>
    <property type="match status" value="1"/>
</dbReference>
<dbReference type="Gene3D" id="3.20.20.150">
    <property type="entry name" value="Divalent-metal-dependent TIM barrel enzymes"/>
    <property type="match status" value="1"/>
</dbReference>
<dbReference type="HAMAP" id="MF_00541">
    <property type="entry name" value="RhaA"/>
    <property type="match status" value="1"/>
</dbReference>
<dbReference type="InterPro" id="IPR050337">
    <property type="entry name" value="L-rhamnose_isomerase"/>
</dbReference>
<dbReference type="InterPro" id="IPR009308">
    <property type="entry name" value="Rhamnose_isomerase"/>
</dbReference>
<dbReference type="InterPro" id="IPR036237">
    <property type="entry name" value="Xyl_isomerase-like_sf"/>
</dbReference>
<dbReference type="NCBIfam" id="NF002203">
    <property type="entry name" value="PRK01076.1"/>
    <property type="match status" value="1"/>
</dbReference>
<dbReference type="NCBIfam" id="TIGR01748">
    <property type="entry name" value="rhaA"/>
    <property type="match status" value="1"/>
</dbReference>
<dbReference type="PANTHER" id="PTHR30268">
    <property type="entry name" value="L-RHAMNOSE ISOMERASE"/>
    <property type="match status" value="1"/>
</dbReference>
<dbReference type="PANTHER" id="PTHR30268:SF0">
    <property type="entry name" value="L-RHAMNOSE ISOMERASE"/>
    <property type="match status" value="1"/>
</dbReference>
<dbReference type="Pfam" id="PF06134">
    <property type="entry name" value="RhaA"/>
    <property type="match status" value="1"/>
</dbReference>
<dbReference type="SUPFAM" id="SSF51658">
    <property type="entry name" value="Xylose isomerase-like"/>
    <property type="match status" value="1"/>
</dbReference>
<comment type="function">
    <text evidence="1">Catalyzes the interconversion of L-rhamnose and L-rhamnulose.</text>
</comment>
<comment type="catalytic activity">
    <reaction evidence="1">
        <text>L-rhamnopyranose = L-rhamnulose</text>
        <dbReference type="Rhea" id="RHEA:23160"/>
        <dbReference type="ChEBI" id="CHEBI:17897"/>
        <dbReference type="ChEBI" id="CHEBI:62346"/>
        <dbReference type="EC" id="5.3.1.14"/>
    </reaction>
</comment>
<comment type="cofactor">
    <cofactor evidence="1">
        <name>Mn(2+)</name>
        <dbReference type="ChEBI" id="CHEBI:29035"/>
    </cofactor>
    <text evidence="1">Binds 1 Mn(2+) ion per subunit.</text>
</comment>
<comment type="pathway">
    <text evidence="1">Carbohydrate degradation; L-rhamnose degradation; glycerone phosphate from L-rhamnose: step 1/3.</text>
</comment>
<comment type="subunit">
    <text evidence="1">Homotetramer.</text>
</comment>
<comment type="subcellular location">
    <subcellularLocation>
        <location evidence="1">Cytoplasm</location>
    </subcellularLocation>
</comment>
<comment type="similarity">
    <text evidence="1">Belongs to the rhamnose isomerase family.</text>
</comment>
<gene>
    <name evidence="1" type="primary">rhaA</name>
    <name type="ordered locus">PC1_0419</name>
</gene>
<accession>C6DJR2</accession>
<feature type="chain" id="PRO_1000211954" description="L-rhamnose isomerase">
    <location>
        <begin position="1"/>
        <end position="420"/>
    </location>
</feature>
<feature type="binding site" evidence="1">
    <location>
        <position position="262"/>
    </location>
    <ligand>
        <name>Mn(2+)</name>
        <dbReference type="ChEBI" id="CHEBI:29035"/>
    </ligand>
</feature>
<feature type="binding site" evidence="1">
    <location>
        <position position="294"/>
    </location>
    <ligand>
        <name>Mn(2+)</name>
        <dbReference type="ChEBI" id="CHEBI:29035"/>
    </ligand>
</feature>
<feature type="binding site" evidence="1">
    <location>
        <position position="296"/>
    </location>
    <ligand>
        <name>Mn(2+)</name>
        <dbReference type="ChEBI" id="CHEBI:29035"/>
    </ligand>
</feature>
<organism>
    <name type="scientific">Pectobacterium carotovorum subsp. carotovorum (strain PC1)</name>
    <dbReference type="NCBI Taxonomy" id="561230"/>
    <lineage>
        <taxon>Bacteria</taxon>
        <taxon>Pseudomonadati</taxon>
        <taxon>Pseudomonadota</taxon>
        <taxon>Gammaproteobacteria</taxon>
        <taxon>Enterobacterales</taxon>
        <taxon>Pectobacteriaceae</taxon>
        <taxon>Pectobacterium</taxon>
    </lineage>
</organism>
<proteinExistence type="inferred from homology"/>
<reference key="1">
    <citation type="submission" date="2009-07" db="EMBL/GenBank/DDBJ databases">
        <title>Complete sequence of Pectobacterium carotovorum subsp. carotovorum PC1.</title>
        <authorList>
            <consortium name="US DOE Joint Genome Institute"/>
            <person name="Lucas S."/>
            <person name="Copeland A."/>
            <person name="Lapidus A."/>
            <person name="Glavina del Rio T."/>
            <person name="Tice H."/>
            <person name="Bruce D."/>
            <person name="Goodwin L."/>
            <person name="Pitluck S."/>
            <person name="Munk A.C."/>
            <person name="Brettin T."/>
            <person name="Detter J.C."/>
            <person name="Han C."/>
            <person name="Tapia R."/>
            <person name="Larimer F."/>
            <person name="Land M."/>
            <person name="Hauser L."/>
            <person name="Kyrpides N."/>
            <person name="Mikhailova N."/>
            <person name="Balakrishnan V."/>
            <person name="Glasner J."/>
            <person name="Perna N.T."/>
        </authorList>
    </citation>
    <scope>NUCLEOTIDE SEQUENCE [LARGE SCALE GENOMIC DNA]</scope>
    <source>
        <strain>PC1</strain>
    </source>
</reference>
<keyword id="KW-0963">Cytoplasm</keyword>
<keyword id="KW-0413">Isomerase</keyword>
<keyword id="KW-0464">Manganese</keyword>
<keyword id="KW-0479">Metal-binding</keyword>
<keyword id="KW-0684">Rhamnose metabolism</keyword>
<name>RHAA_PECCP</name>
<evidence type="ECO:0000255" key="1">
    <source>
        <dbReference type="HAMAP-Rule" id="MF_00541"/>
    </source>
</evidence>